<dbReference type="EC" id="2.7.8.7" evidence="1"/>
<dbReference type="EMBL" id="CP000468">
    <property type="protein sequence ID" value="ABJ01983.1"/>
    <property type="molecule type" value="Genomic_DNA"/>
</dbReference>
<dbReference type="RefSeq" id="WP_000986038.1">
    <property type="nucleotide sequence ID" value="NZ_CADILS010000012.1"/>
</dbReference>
<dbReference type="SMR" id="A1AE93"/>
<dbReference type="KEGG" id="ecv:APECO1_3968"/>
<dbReference type="HOGENOM" id="CLU_089696_3_1_6"/>
<dbReference type="Proteomes" id="UP000008216">
    <property type="component" value="Chromosome"/>
</dbReference>
<dbReference type="GO" id="GO:0005737">
    <property type="term" value="C:cytoplasm"/>
    <property type="evidence" value="ECO:0007669"/>
    <property type="project" value="UniProtKB-SubCell"/>
</dbReference>
<dbReference type="GO" id="GO:0008897">
    <property type="term" value="F:holo-[acyl-carrier-protein] synthase activity"/>
    <property type="evidence" value="ECO:0007669"/>
    <property type="project" value="UniProtKB-UniRule"/>
</dbReference>
<dbReference type="GO" id="GO:0000287">
    <property type="term" value="F:magnesium ion binding"/>
    <property type="evidence" value="ECO:0007669"/>
    <property type="project" value="UniProtKB-UniRule"/>
</dbReference>
<dbReference type="GO" id="GO:0006633">
    <property type="term" value="P:fatty acid biosynthetic process"/>
    <property type="evidence" value="ECO:0007669"/>
    <property type="project" value="UniProtKB-UniRule"/>
</dbReference>
<dbReference type="FunFam" id="3.90.470.20:FF:000001">
    <property type="entry name" value="Holo-[acyl-carrier-protein] synthase"/>
    <property type="match status" value="1"/>
</dbReference>
<dbReference type="Gene3D" id="3.90.470.20">
    <property type="entry name" value="4'-phosphopantetheinyl transferase domain"/>
    <property type="match status" value="1"/>
</dbReference>
<dbReference type="HAMAP" id="MF_00101">
    <property type="entry name" value="AcpS"/>
    <property type="match status" value="1"/>
</dbReference>
<dbReference type="InterPro" id="IPR008278">
    <property type="entry name" value="4-PPantetheinyl_Trfase_dom"/>
</dbReference>
<dbReference type="InterPro" id="IPR037143">
    <property type="entry name" value="4-PPantetheinyl_Trfase_dom_sf"/>
</dbReference>
<dbReference type="InterPro" id="IPR002582">
    <property type="entry name" value="ACPS"/>
</dbReference>
<dbReference type="InterPro" id="IPR004568">
    <property type="entry name" value="Ppantetheine-prot_Trfase_dom"/>
</dbReference>
<dbReference type="NCBIfam" id="TIGR00516">
    <property type="entry name" value="acpS"/>
    <property type="match status" value="1"/>
</dbReference>
<dbReference type="NCBIfam" id="TIGR00556">
    <property type="entry name" value="pantethn_trn"/>
    <property type="match status" value="1"/>
</dbReference>
<dbReference type="Pfam" id="PF01648">
    <property type="entry name" value="ACPS"/>
    <property type="match status" value="1"/>
</dbReference>
<dbReference type="SUPFAM" id="SSF56214">
    <property type="entry name" value="4'-phosphopantetheinyl transferase"/>
    <property type="match status" value="1"/>
</dbReference>
<name>ACPS_ECOK1</name>
<accession>A1AE93</accession>
<reference key="1">
    <citation type="journal article" date="2007" name="J. Bacteriol.">
        <title>The genome sequence of avian pathogenic Escherichia coli strain O1:K1:H7 shares strong similarities with human extraintestinal pathogenic E. coli genomes.</title>
        <authorList>
            <person name="Johnson T.J."/>
            <person name="Kariyawasam S."/>
            <person name="Wannemuehler Y."/>
            <person name="Mangiamele P."/>
            <person name="Johnson S.J."/>
            <person name="Doetkott C."/>
            <person name="Skyberg J.A."/>
            <person name="Lynne A.M."/>
            <person name="Johnson J.R."/>
            <person name="Nolan L.K."/>
        </authorList>
    </citation>
    <scope>NUCLEOTIDE SEQUENCE [LARGE SCALE GENOMIC DNA]</scope>
</reference>
<sequence>MAILGLGTDIVEIARIEAVIARSGERLARRVLSDNEWEIWKTHHQPVRFLAKRFAVKEAAAKAFGTGIRNGLAFNQFEVFNDELGKPRLRLWGEALKLAEKLGVVNMHVTLADERHYACATVIIES</sequence>
<evidence type="ECO:0000255" key="1">
    <source>
        <dbReference type="HAMAP-Rule" id="MF_00101"/>
    </source>
</evidence>
<feature type="chain" id="PRO_1000008420" description="Holo-[acyl-carrier-protein] synthase">
    <location>
        <begin position="1"/>
        <end position="126"/>
    </location>
</feature>
<feature type="binding site" evidence="1">
    <location>
        <position position="9"/>
    </location>
    <ligand>
        <name>Mg(2+)</name>
        <dbReference type="ChEBI" id="CHEBI:18420"/>
    </ligand>
</feature>
<feature type="binding site" evidence="1">
    <location>
        <position position="58"/>
    </location>
    <ligand>
        <name>Mg(2+)</name>
        <dbReference type="ChEBI" id="CHEBI:18420"/>
    </ligand>
</feature>
<protein>
    <recommendedName>
        <fullName evidence="1">Holo-[acyl-carrier-protein] synthase</fullName>
        <shortName evidence="1">Holo-ACP synthase</shortName>
        <ecNumber evidence="1">2.7.8.7</ecNumber>
    </recommendedName>
    <alternativeName>
        <fullName evidence="1">4'-phosphopantetheinyl transferase AcpS</fullName>
    </alternativeName>
</protein>
<gene>
    <name evidence="1" type="primary">acpS</name>
    <name type="ordered locus">Ecok1_24890</name>
    <name type="ORF">APECO1_3968</name>
</gene>
<keyword id="KW-0963">Cytoplasm</keyword>
<keyword id="KW-0275">Fatty acid biosynthesis</keyword>
<keyword id="KW-0276">Fatty acid metabolism</keyword>
<keyword id="KW-0444">Lipid biosynthesis</keyword>
<keyword id="KW-0443">Lipid metabolism</keyword>
<keyword id="KW-0460">Magnesium</keyword>
<keyword id="KW-0479">Metal-binding</keyword>
<keyword id="KW-1185">Reference proteome</keyword>
<keyword id="KW-0808">Transferase</keyword>
<comment type="function">
    <text evidence="1">Transfers the 4'-phosphopantetheine moiety from coenzyme A to a Ser of acyl-carrier-protein.</text>
</comment>
<comment type="catalytic activity">
    <reaction evidence="1">
        <text>apo-[ACP] + CoA = holo-[ACP] + adenosine 3',5'-bisphosphate + H(+)</text>
        <dbReference type="Rhea" id="RHEA:12068"/>
        <dbReference type="Rhea" id="RHEA-COMP:9685"/>
        <dbReference type="Rhea" id="RHEA-COMP:9690"/>
        <dbReference type="ChEBI" id="CHEBI:15378"/>
        <dbReference type="ChEBI" id="CHEBI:29999"/>
        <dbReference type="ChEBI" id="CHEBI:57287"/>
        <dbReference type="ChEBI" id="CHEBI:58343"/>
        <dbReference type="ChEBI" id="CHEBI:64479"/>
        <dbReference type="EC" id="2.7.8.7"/>
    </reaction>
</comment>
<comment type="cofactor">
    <cofactor evidence="1">
        <name>Mg(2+)</name>
        <dbReference type="ChEBI" id="CHEBI:18420"/>
    </cofactor>
</comment>
<comment type="subcellular location">
    <subcellularLocation>
        <location evidence="1">Cytoplasm</location>
    </subcellularLocation>
</comment>
<comment type="similarity">
    <text evidence="1">Belongs to the P-Pant transferase superfamily. AcpS family.</text>
</comment>
<organism>
    <name type="scientific">Escherichia coli O1:K1 / APEC</name>
    <dbReference type="NCBI Taxonomy" id="405955"/>
    <lineage>
        <taxon>Bacteria</taxon>
        <taxon>Pseudomonadati</taxon>
        <taxon>Pseudomonadota</taxon>
        <taxon>Gammaproteobacteria</taxon>
        <taxon>Enterobacterales</taxon>
        <taxon>Enterobacteriaceae</taxon>
        <taxon>Escherichia</taxon>
    </lineage>
</organism>
<proteinExistence type="inferred from homology"/>